<sequence>MKVTLIAILTCAAVLVLHTTAAEELEAESQPMEVGMPDTELAAVDEERLFECSVSCEIEKEGNKDCKKKKCKGGWKCKFNMCVKV</sequence>
<comment type="function">
    <text evidence="4">Neurotoxin active on both insects and mammals.</text>
</comment>
<comment type="subunit">
    <text>Monomer.</text>
</comment>
<comment type="subcellular location">
    <subcellularLocation>
        <location>Secreted</location>
    </subcellularLocation>
</comment>
<comment type="tissue specificity">
    <text>Expressed by the venom gland.</text>
</comment>
<comment type="mass spectrometry"/>
<comment type="toxic dose">
    <text evidence="4">LD(50) is 1.41 mg/kg by intracerebroventricular injection into mice.</text>
</comment>
<comment type="toxic dose">
    <text evidence="4">PD(50) is 16 mg/kg in cockroaches.</text>
</comment>
<comment type="similarity">
    <text evidence="5">Belongs to the neurotoxin 12 (Hwtx-2) family. 02 (Hwtx-2) subfamily.</text>
</comment>
<evidence type="ECO:0000250" key="1"/>
<evidence type="ECO:0000255" key="2"/>
<evidence type="ECO:0000269" key="3">
    <source>
    </source>
</evidence>
<evidence type="ECO:0000269" key="4">
    <source>
    </source>
</evidence>
<evidence type="ECO:0000305" key="5"/>
<feature type="signal peptide" evidence="2">
    <location>
        <begin position="1"/>
        <end position="22"/>
    </location>
</feature>
<feature type="propeptide" id="PRO_0000400735" evidence="3 4">
    <location>
        <begin position="23"/>
        <end position="48"/>
    </location>
</feature>
<feature type="peptide" id="PRO_0000400736" description="U4-theraphotoxin-Hhn1a">
    <location>
        <begin position="49"/>
        <end position="85"/>
    </location>
</feature>
<feature type="disulfide bond" evidence="1">
    <location>
        <begin position="52"/>
        <end position="66"/>
    </location>
</feature>
<feature type="disulfide bond" evidence="1">
    <location>
        <begin position="56"/>
        <end position="77"/>
    </location>
</feature>
<feature type="disulfide bond" evidence="1">
    <location>
        <begin position="71"/>
        <end position="82"/>
    </location>
</feature>
<proteinExistence type="evidence at protein level"/>
<reference key="1">
    <citation type="journal article" date="2010" name="J. Proteome Res.">
        <title>Molecular diversification of peptide toxins from the tarantula Haplopelma hainanum (Ornithoctonus hainana) venom based on transcriptomic, peptidomic, and genomic analyses.</title>
        <authorList>
            <person name="Tang X."/>
            <person name="Zhang Y."/>
            <person name="Hu W."/>
            <person name="Xu D."/>
            <person name="Tao H."/>
            <person name="Yang X."/>
            <person name="Li Y."/>
            <person name="Jiang L."/>
            <person name="Liang S."/>
        </authorList>
    </citation>
    <scope>NUCLEOTIDE SEQUENCE [LARGE SCALE MRNA]</scope>
    <scope>PROTEIN SEQUENCE OF 49-85</scope>
    <scope>IDENTIFICATION BY MASS SPECTROMETRY</scope>
    <source>
        <tissue>Venom</tissue>
        <tissue>Venom gland</tissue>
    </source>
</reference>
<reference key="2">
    <citation type="journal article" date="2010" name="Dong Wu Xue Yan Jiu">
        <title>Isolation and characterization of Hainantoxin-II, a new neurotoxic peptide from the Chinese bird spider (Haplopelma hainanum).</title>
        <authorList>
            <person name="Pan J.Y."/>
            <person name="Yu Z.Q."/>
        </authorList>
    </citation>
    <scope>PROTEIN SEQUENCE OF 49-85</scope>
    <scope>FUNCTION</scope>
    <scope>MASS SPECTROMETRY</scope>
    <scope>TOXIC DOSE</scope>
    <source>
        <tissue>Venom</tissue>
    </source>
</reference>
<protein>
    <recommendedName>
        <fullName>U4-theraphotoxin-Hhn1a</fullName>
        <shortName>U4-TRTX-Hhn1a</shortName>
    </recommendedName>
    <alternativeName>
        <fullName>Hainantoxin-II.10</fullName>
        <shortName>HNTX-II.10</shortName>
    </alternativeName>
    <alternativeName>
        <fullName>Peptide F8-20.15</fullName>
    </alternativeName>
</protein>
<accession>D2Y228</accession>
<organism>
    <name type="scientific">Cyriopagopus hainanus</name>
    <name type="common">Chinese bird spider</name>
    <name type="synonym">Haplopelma hainanum</name>
    <dbReference type="NCBI Taxonomy" id="209901"/>
    <lineage>
        <taxon>Eukaryota</taxon>
        <taxon>Metazoa</taxon>
        <taxon>Ecdysozoa</taxon>
        <taxon>Arthropoda</taxon>
        <taxon>Chelicerata</taxon>
        <taxon>Arachnida</taxon>
        <taxon>Araneae</taxon>
        <taxon>Mygalomorphae</taxon>
        <taxon>Theraphosidae</taxon>
        <taxon>Haplopelma</taxon>
    </lineage>
</organism>
<dbReference type="EMBL" id="GU292905">
    <property type="protein sequence ID" value="ADB56721.1"/>
    <property type="molecule type" value="mRNA"/>
</dbReference>
<dbReference type="SMR" id="D2Y228"/>
<dbReference type="ArachnoServer" id="AS001783">
    <property type="toxin name" value="U4-theraphotoxin-Hhn1a"/>
</dbReference>
<dbReference type="GO" id="GO:0005576">
    <property type="term" value="C:extracellular region"/>
    <property type="evidence" value="ECO:0007669"/>
    <property type="project" value="UniProtKB-SubCell"/>
</dbReference>
<dbReference type="GO" id="GO:0035792">
    <property type="term" value="C:host cell postsynaptic membrane"/>
    <property type="evidence" value="ECO:0007669"/>
    <property type="project" value="UniProtKB-KW"/>
</dbReference>
<dbReference type="GO" id="GO:0090729">
    <property type="term" value="F:toxin activity"/>
    <property type="evidence" value="ECO:0007669"/>
    <property type="project" value="UniProtKB-KW"/>
</dbReference>
<dbReference type="InterPro" id="IPR012625">
    <property type="entry name" value="Hwtx-2-like"/>
</dbReference>
<dbReference type="Pfam" id="PF08089">
    <property type="entry name" value="Toxin_20"/>
    <property type="match status" value="1"/>
</dbReference>
<dbReference type="SUPFAM" id="SSF57059">
    <property type="entry name" value="omega toxin-like"/>
    <property type="match status" value="1"/>
</dbReference>
<dbReference type="PROSITE" id="PS60022">
    <property type="entry name" value="HWTX_2"/>
    <property type="match status" value="1"/>
</dbReference>
<keyword id="KW-0903">Direct protein sequencing</keyword>
<keyword id="KW-1015">Disulfide bond</keyword>
<keyword id="KW-0528">Neurotoxin</keyword>
<keyword id="KW-0629">Postsynaptic neurotoxin</keyword>
<keyword id="KW-0964">Secreted</keyword>
<keyword id="KW-0732">Signal</keyword>
<keyword id="KW-0800">Toxin</keyword>
<name>H2A10_CYRHA</name>